<reference key="1">
    <citation type="journal article" date="2003" name="Infect. Immun.">
        <title>Catalases of Aspergillus fumigatus.</title>
        <authorList>
            <person name="Paris S."/>
            <person name="Wysong D."/>
            <person name="Debeaupuis J.-P."/>
            <person name="Shibuya K."/>
            <person name="Philippe B."/>
            <person name="Diamond R.D."/>
            <person name="Latge J.-P."/>
        </authorList>
    </citation>
    <scope>NUCLEOTIDE SEQUENCE [GENOMIC DNA]</scope>
    <scope>PROTEIN SEQUENCE OF 385-397</scope>
    <scope>SUBUNIT</scope>
    <scope>ACTIVITY REGULATION</scope>
    <scope>FUNCTION</scope>
</reference>
<reference key="2">
    <citation type="journal article" date="2005" name="Nature">
        <title>Genomic sequence of the pathogenic and allergenic filamentous fungus Aspergillus fumigatus.</title>
        <authorList>
            <person name="Nierman W.C."/>
            <person name="Pain A."/>
            <person name="Anderson M.J."/>
            <person name="Wortman J.R."/>
            <person name="Kim H.S."/>
            <person name="Arroyo J."/>
            <person name="Berriman M."/>
            <person name="Abe K."/>
            <person name="Archer D.B."/>
            <person name="Bermejo C."/>
            <person name="Bennett J.W."/>
            <person name="Bowyer P."/>
            <person name="Chen D."/>
            <person name="Collins M."/>
            <person name="Coulsen R."/>
            <person name="Davies R."/>
            <person name="Dyer P.S."/>
            <person name="Farman M.L."/>
            <person name="Fedorova N."/>
            <person name="Fedorova N.D."/>
            <person name="Feldblyum T.V."/>
            <person name="Fischer R."/>
            <person name="Fosker N."/>
            <person name="Fraser A."/>
            <person name="Garcia J.L."/>
            <person name="Garcia M.J."/>
            <person name="Goble A."/>
            <person name="Goldman G.H."/>
            <person name="Gomi K."/>
            <person name="Griffith-Jones S."/>
            <person name="Gwilliam R."/>
            <person name="Haas B.J."/>
            <person name="Haas H."/>
            <person name="Harris D.E."/>
            <person name="Horiuchi H."/>
            <person name="Huang J."/>
            <person name="Humphray S."/>
            <person name="Jimenez J."/>
            <person name="Keller N."/>
            <person name="Khouri H."/>
            <person name="Kitamoto K."/>
            <person name="Kobayashi T."/>
            <person name="Konzack S."/>
            <person name="Kulkarni R."/>
            <person name="Kumagai T."/>
            <person name="Lafton A."/>
            <person name="Latge J.-P."/>
            <person name="Li W."/>
            <person name="Lord A."/>
            <person name="Lu C."/>
            <person name="Majoros W.H."/>
            <person name="May G.S."/>
            <person name="Miller B.L."/>
            <person name="Mohamoud Y."/>
            <person name="Molina M."/>
            <person name="Monod M."/>
            <person name="Mouyna I."/>
            <person name="Mulligan S."/>
            <person name="Murphy L.D."/>
            <person name="O'Neil S."/>
            <person name="Paulsen I."/>
            <person name="Penalva M.A."/>
            <person name="Pertea M."/>
            <person name="Price C."/>
            <person name="Pritchard B.L."/>
            <person name="Quail M.A."/>
            <person name="Rabbinowitsch E."/>
            <person name="Rawlins N."/>
            <person name="Rajandream M.A."/>
            <person name="Reichard U."/>
            <person name="Renauld H."/>
            <person name="Robson G.D."/>
            <person name="Rodriguez de Cordoba S."/>
            <person name="Rodriguez-Pena J.M."/>
            <person name="Ronning C.M."/>
            <person name="Rutter S."/>
            <person name="Salzberg S.L."/>
            <person name="Sanchez M."/>
            <person name="Sanchez-Ferrero J.C."/>
            <person name="Saunders D."/>
            <person name="Seeger K."/>
            <person name="Squares R."/>
            <person name="Squares S."/>
            <person name="Takeuchi M."/>
            <person name="Tekaia F."/>
            <person name="Turner G."/>
            <person name="Vazquez de Aldana C.R."/>
            <person name="Weidman J."/>
            <person name="White O."/>
            <person name="Woodward J.R."/>
            <person name="Yu J.-H."/>
            <person name="Fraser C.M."/>
            <person name="Galagan J.E."/>
            <person name="Asai K."/>
            <person name="Machida M."/>
            <person name="Hall N."/>
            <person name="Barrell B.G."/>
            <person name="Denning D.W."/>
        </authorList>
    </citation>
    <scope>NUCLEOTIDE SEQUENCE [LARGE SCALE GENOMIC DNA]</scope>
    <source>
        <strain>ATCC MYA-4609 / CBS 101355 / FGSC A1100 / Af293</strain>
    </source>
</reference>
<keyword id="KW-0963">Cytoplasm</keyword>
<keyword id="KW-0903">Direct protein sequencing</keyword>
<keyword id="KW-0349">Heme</keyword>
<keyword id="KW-0376">Hydrogen peroxide</keyword>
<keyword id="KW-0408">Iron</keyword>
<keyword id="KW-0479">Metal-binding</keyword>
<keyword id="KW-0560">Oxidoreductase</keyword>
<keyword id="KW-0575">Peroxidase</keyword>
<keyword id="KW-1185">Reference proteome</keyword>
<organism>
    <name type="scientific">Aspergillus fumigatus (strain ATCC MYA-4609 / CBS 101355 / FGSC A1100 / Af293)</name>
    <name type="common">Neosartorya fumigata</name>
    <dbReference type="NCBI Taxonomy" id="330879"/>
    <lineage>
        <taxon>Eukaryota</taxon>
        <taxon>Fungi</taxon>
        <taxon>Dikarya</taxon>
        <taxon>Ascomycota</taxon>
        <taxon>Pezizomycotina</taxon>
        <taxon>Eurotiomycetes</taxon>
        <taxon>Eurotiomycetidae</taxon>
        <taxon>Eurotiales</taxon>
        <taxon>Aspergillaceae</taxon>
        <taxon>Aspergillus</taxon>
        <taxon>Aspergillus subgen. Fumigati</taxon>
    </lineage>
</organism>
<name>KATG_ASPFU</name>
<accession>Q7Z7W6</accession>
<accession>Q4WBB1</accession>
<evidence type="ECO:0000255" key="1">
    <source>
        <dbReference type="HAMAP-Rule" id="MF_03108"/>
    </source>
</evidence>
<evidence type="ECO:0000256" key="2">
    <source>
        <dbReference type="SAM" id="MobiDB-lite"/>
    </source>
</evidence>
<evidence type="ECO:0000269" key="3">
    <source>
    </source>
</evidence>
<gene>
    <name evidence="1" type="primary">katG</name>
    <name type="synonym">CAT2</name>
    <name type="ORF">AFUA_8G01670</name>
</gene>
<proteinExistence type="evidence at protein level"/>
<comment type="function">
    <text evidence="1 3">Bifunctional enzyme with both catalase and broad-spectrum peroxidase activity. May be involved in protection from the host during host infection.</text>
</comment>
<comment type="catalytic activity">
    <reaction evidence="1">
        <text>H2O2 + AH2 = A + 2 H2O</text>
        <dbReference type="Rhea" id="RHEA:30275"/>
        <dbReference type="ChEBI" id="CHEBI:13193"/>
        <dbReference type="ChEBI" id="CHEBI:15377"/>
        <dbReference type="ChEBI" id="CHEBI:16240"/>
        <dbReference type="ChEBI" id="CHEBI:17499"/>
        <dbReference type="EC" id="1.11.1.21"/>
    </reaction>
</comment>
<comment type="catalytic activity">
    <reaction evidence="1">
        <text>2 H2O2 = O2 + 2 H2O</text>
        <dbReference type="Rhea" id="RHEA:20309"/>
        <dbReference type="ChEBI" id="CHEBI:15377"/>
        <dbReference type="ChEBI" id="CHEBI:15379"/>
        <dbReference type="ChEBI" id="CHEBI:16240"/>
        <dbReference type="EC" id="1.11.1.21"/>
    </reaction>
</comment>
<comment type="cofactor">
    <cofactor evidence="1">
        <name>heme b</name>
        <dbReference type="ChEBI" id="CHEBI:60344"/>
    </cofactor>
    <text evidence="1">Binds 1 heme b (iron(II)-protoporphyrin IX) group per monomer.</text>
</comment>
<comment type="activity regulation">
    <text evidence="3">Sensitive to heat and heavy metals.</text>
</comment>
<comment type="subunit">
    <text evidence="3">Monomer.</text>
</comment>
<comment type="subcellular location">
    <subcellularLocation>
        <location evidence="1">Cytoplasm</location>
    </subcellularLocation>
</comment>
<comment type="PTM">
    <text>Not glycosylated.</text>
</comment>
<comment type="PTM">
    <text evidence="1">Formation of the three residue Trp-Tyr-Met cross-link is important for the catalase, but not the peroxidase activity of the enzyme.</text>
</comment>
<comment type="similarity">
    <text evidence="1">Belongs to the peroxidase family. Peroxidase/catalase subfamily.</text>
</comment>
<protein>
    <recommendedName>
        <fullName evidence="1">Catalase-peroxidase</fullName>
        <shortName evidence="1">CP</shortName>
        <ecNumber evidence="1">1.11.1.21</ecNumber>
    </recommendedName>
    <alternativeName>
        <fullName>Catalase-2</fullName>
    </alternativeName>
    <alternativeName>
        <fullName evidence="1">Peroxidase/catalase</fullName>
    </alternativeName>
</protein>
<feature type="chain" id="PRO_0000354100" description="Catalase-peroxidase">
    <location>
        <begin position="1"/>
        <end position="759"/>
    </location>
</feature>
<feature type="region of interest" description="Disordered" evidence="2">
    <location>
        <begin position="1"/>
        <end position="24"/>
    </location>
</feature>
<feature type="active site" description="Proton acceptor" evidence="1">
    <location>
        <position position="97"/>
    </location>
</feature>
<feature type="binding site" description="axial binding residue" evidence="1">
    <location>
        <position position="283"/>
    </location>
    <ligand>
        <name>heme b</name>
        <dbReference type="ChEBI" id="CHEBI:60344"/>
    </ligand>
    <ligandPart>
        <name>Fe</name>
        <dbReference type="ChEBI" id="CHEBI:18248"/>
    </ligandPart>
</feature>
<feature type="site" description="Transition state stabilizer" evidence="1">
    <location>
        <position position="93"/>
    </location>
</feature>
<feature type="cross-link" description="Tryptophyl-tyrosyl-methioninium (Trp-Tyr) (with M-268)" evidence="1">
    <location>
        <begin position="96"/>
        <end position="242"/>
    </location>
</feature>
<feature type="cross-link" description="Tryptophyl-tyrosyl-methioninium (Tyr-Met) (with W-96)" evidence="1">
    <location>
        <begin position="242"/>
        <end position="268"/>
    </location>
</feature>
<dbReference type="EC" id="1.11.1.21" evidence="1"/>
<dbReference type="EMBL" id="AY125354">
    <property type="protein sequence ID" value="AAM95780.1"/>
    <property type="molecule type" value="Genomic_DNA"/>
</dbReference>
<dbReference type="EMBL" id="AAHF01000014">
    <property type="protein sequence ID" value="EAL85001.1"/>
    <property type="molecule type" value="Genomic_DNA"/>
</dbReference>
<dbReference type="RefSeq" id="XP_747039.1">
    <property type="nucleotide sequence ID" value="XM_741946.1"/>
</dbReference>
<dbReference type="SMR" id="Q7Z7W6"/>
<dbReference type="STRING" id="330879.Q7Z7W6"/>
<dbReference type="Allergome" id="8994">
    <property type="allergen name" value="Asp f CP"/>
</dbReference>
<dbReference type="PeroxiBase" id="1881">
    <property type="entry name" value="AfumCP01"/>
</dbReference>
<dbReference type="SwissPalm" id="Q7Z7W6"/>
<dbReference type="EnsemblFungi" id="EAL85001">
    <property type="protein sequence ID" value="EAL85001"/>
    <property type="gene ID" value="AFUA_8G01670"/>
</dbReference>
<dbReference type="GeneID" id="3504583"/>
<dbReference type="KEGG" id="afm:AFUA_8G01670"/>
<dbReference type="VEuPathDB" id="FungiDB:Afu8g01670"/>
<dbReference type="eggNOG" id="ENOG502QTDY">
    <property type="taxonomic scope" value="Eukaryota"/>
</dbReference>
<dbReference type="HOGENOM" id="CLU_025424_2_0_1"/>
<dbReference type="InParanoid" id="Q7Z7W6"/>
<dbReference type="OMA" id="GPETTWL"/>
<dbReference type="OrthoDB" id="407695at2759"/>
<dbReference type="Proteomes" id="UP000002530">
    <property type="component" value="Chromosome 8"/>
</dbReference>
<dbReference type="GO" id="GO:0005829">
    <property type="term" value="C:cytosol"/>
    <property type="evidence" value="ECO:0000318"/>
    <property type="project" value="GO_Central"/>
</dbReference>
<dbReference type="GO" id="GO:0004096">
    <property type="term" value="F:catalase activity"/>
    <property type="evidence" value="ECO:0000314"/>
    <property type="project" value="AspGD"/>
</dbReference>
<dbReference type="GO" id="GO:0020037">
    <property type="term" value="F:heme binding"/>
    <property type="evidence" value="ECO:0000318"/>
    <property type="project" value="GO_Central"/>
</dbReference>
<dbReference type="GO" id="GO:0046872">
    <property type="term" value="F:metal ion binding"/>
    <property type="evidence" value="ECO:0007669"/>
    <property type="project" value="UniProtKB-KW"/>
</dbReference>
<dbReference type="GO" id="GO:0004601">
    <property type="term" value="F:peroxidase activity"/>
    <property type="evidence" value="ECO:0000314"/>
    <property type="project" value="AspGD"/>
</dbReference>
<dbReference type="GO" id="GO:0070301">
    <property type="term" value="P:cellular response to hydrogen peroxide"/>
    <property type="evidence" value="ECO:0000318"/>
    <property type="project" value="GO_Central"/>
</dbReference>
<dbReference type="GO" id="GO:0042744">
    <property type="term" value="P:hydrogen peroxide catabolic process"/>
    <property type="evidence" value="ECO:0000318"/>
    <property type="project" value="GO_Central"/>
</dbReference>
<dbReference type="CDD" id="cd00649">
    <property type="entry name" value="catalase_peroxidase_1"/>
    <property type="match status" value="1"/>
</dbReference>
<dbReference type="CDD" id="cd08200">
    <property type="entry name" value="catalase_peroxidase_2"/>
    <property type="match status" value="1"/>
</dbReference>
<dbReference type="FunFam" id="1.10.420.10:FF:000002">
    <property type="entry name" value="Catalase-peroxidase"/>
    <property type="match status" value="1"/>
</dbReference>
<dbReference type="FunFam" id="1.10.420.10:FF:000004">
    <property type="entry name" value="Catalase-peroxidase"/>
    <property type="match status" value="1"/>
</dbReference>
<dbReference type="FunFam" id="1.10.520.10:FF:000002">
    <property type="entry name" value="Catalase-peroxidase"/>
    <property type="match status" value="1"/>
</dbReference>
<dbReference type="Gene3D" id="1.10.520.10">
    <property type="match status" value="2"/>
</dbReference>
<dbReference type="Gene3D" id="1.10.420.10">
    <property type="entry name" value="Peroxidase, domain 2"/>
    <property type="match status" value="2"/>
</dbReference>
<dbReference type="HAMAP" id="MF_01961">
    <property type="entry name" value="Catal_peroxid"/>
    <property type="match status" value="1"/>
</dbReference>
<dbReference type="InterPro" id="IPR000763">
    <property type="entry name" value="Catalase_peroxidase"/>
</dbReference>
<dbReference type="InterPro" id="IPR002016">
    <property type="entry name" value="Haem_peroxidase"/>
</dbReference>
<dbReference type="InterPro" id="IPR010255">
    <property type="entry name" value="Haem_peroxidase_sf"/>
</dbReference>
<dbReference type="InterPro" id="IPR019794">
    <property type="entry name" value="Peroxidases_AS"/>
</dbReference>
<dbReference type="InterPro" id="IPR019793">
    <property type="entry name" value="Peroxidases_heam-ligand_BS"/>
</dbReference>
<dbReference type="NCBIfam" id="TIGR00198">
    <property type="entry name" value="cat_per_HPI"/>
    <property type="match status" value="1"/>
</dbReference>
<dbReference type="NCBIfam" id="NF011635">
    <property type="entry name" value="PRK15061.1"/>
    <property type="match status" value="1"/>
</dbReference>
<dbReference type="PANTHER" id="PTHR30555:SF0">
    <property type="entry name" value="CATALASE-PEROXIDASE"/>
    <property type="match status" value="1"/>
</dbReference>
<dbReference type="PANTHER" id="PTHR30555">
    <property type="entry name" value="HYDROPEROXIDASE I, BIFUNCTIONAL CATALASE-PEROXIDASE"/>
    <property type="match status" value="1"/>
</dbReference>
<dbReference type="Pfam" id="PF00141">
    <property type="entry name" value="peroxidase"/>
    <property type="match status" value="2"/>
</dbReference>
<dbReference type="PRINTS" id="PR00460">
    <property type="entry name" value="BPEROXIDASE"/>
</dbReference>
<dbReference type="PRINTS" id="PR00458">
    <property type="entry name" value="PEROXIDASE"/>
</dbReference>
<dbReference type="SUPFAM" id="SSF48113">
    <property type="entry name" value="Heme-dependent peroxidases"/>
    <property type="match status" value="2"/>
</dbReference>
<dbReference type="PROSITE" id="PS00435">
    <property type="entry name" value="PEROXIDASE_1"/>
    <property type="match status" value="1"/>
</dbReference>
<dbReference type="PROSITE" id="PS00436">
    <property type="entry name" value="PEROXIDASE_2"/>
    <property type="match status" value="1"/>
</dbReference>
<dbReference type="PROSITE" id="PS50873">
    <property type="entry name" value="PEROXIDASE_4"/>
    <property type="match status" value="2"/>
</dbReference>
<sequence length="759" mass="83762">MTQDKCPFKEQSSQPNFAGGGTSNKDWWPDRLKLNILRQHTAVSNPLDADFDYAAAFNSLDYEGLKKDLRALMTDSQDWWPADFGHYGGLFIRMAWHSAGTYRVFDGRGGAGQGQQRFAPLNSWPDNVSLDKARRLLWPIKQKYGNKISWADLLILTGNVALESMGFKTFGFAGGRPDTWEADEATYWGRETTWLGNDARYAKGFSGSDKRGSLIADEESHKTTHSRELETPLAAAHMGLIYVNPEGPDGNPDPVAAAHDIRDTFGRMAMNDEETVALIAGGHTFGKTHGAAPADNVGKEPEAAGLEAQGLGWANKHGSGKGPHTITSGLEVTWTKTPTQWNNNFLEYLFKFEWELTKSPAGAHQWVAKNADEIIPDAYDASKKHKPTMLTTDLSLRFDPAYEKIARRFLEHPDQFADAFARAWFKLTHRDMGPRARYLGPEVPSEVLIWQDPIPAVNHPLVDASDIAALKDEILASGVPPRSFISTAWAAASTFRGSDKRGGANGARIRLAPQRDWEVNNQPWLREALSALEAVQSRFNARGDSKKVSLADLIVLAGCAAVEKAAQDAGHPIKVPFVPGRMDASQEETDVQSFNHMEPFADGFRNFAKGPARPRAEHYLVDKAQLLNLSAPEMTVLVGGLRVLNTNYDGSTHGVFTSRPGALTNDFFVHLLDMNTAWKDVGNGELFEGSDRKTGGKKWTATRADLVFGSNAELRAIAEVYASNDGDMKFVKDFVAAWNKVMNLDRFDLKGKQTIPARL</sequence>